<dbReference type="EMBL" id="AM999887">
    <property type="protein sequence ID" value="CAQ55263.1"/>
    <property type="molecule type" value="Genomic_DNA"/>
</dbReference>
<dbReference type="RefSeq" id="WP_010404613.1">
    <property type="nucleotide sequence ID" value="NC_010981.1"/>
</dbReference>
<dbReference type="SMR" id="B3CN15"/>
<dbReference type="KEGG" id="wpi:WP1155"/>
<dbReference type="eggNOG" id="COG0230">
    <property type="taxonomic scope" value="Bacteria"/>
</dbReference>
<dbReference type="HOGENOM" id="CLU_129938_2_0_5"/>
<dbReference type="Proteomes" id="UP000008814">
    <property type="component" value="Chromosome"/>
</dbReference>
<dbReference type="GO" id="GO:1990904">
    <property type="term" value="C:ribonucleoprotein complex"/>
    <property type="evidence" value="ECO:0007669"/>
    <property type="project" value="UniProtKB-KW"/>
</dbReference>
<dbReference type="GO" id="GO:0005840">
    <property type="term" value="C:ribosome"/>
    <property type="evidence" value="ECO:0007669"/>
    <property type="project" value="UniProtKB-KW"/>
</dbReference>
<dbReference type="GO" id="GO:0003735">
    <property type="term" value="F:structural constituent of ribosome"/>
    <property type="evidence" value="ECO:0007669"/>
    <property type="project" value="InterPro"/>
</dbReference>
<dbReference type="GO" id="GO:0006412">
    <property type="term" value="P:translation"/>
    <property type="evidence" value="ECO:0007669"/>
    <property type="project" value="UniProtKB-UniRule"/>
</dbReference>
<dbReference type="FunFam" id="1.10.287.3980:FF:000001">
    <property type="entry name" value="Mitochondrial ribosomal protein L34"/>
    <property type="match status" value="1"/>
</dbReference>
<dbReference type="Gene3D" id="1.10.287.3980">
    <property type="match status" value="1"/>
</dbReference>
<dbReference type="HAMAP" id="MF_00391">
    <property type="entry name" value="Ribosomal_bL34"/>
    <property type="match status" value="1"/>
</dbReference>
<dbReference type="InterPro" id="IPR000271">
    <property type="entry name" value="Ribosomal_bL34"/>
</dbReference>
<dbReference type="InterPro" id="IPR020939">
    <property type="entry name" value="Ribosomal_bL34_CS"/>
</dbReference>
<dbReference type="NCBIfam" id="TIGR01030">
    <property type="entry name" value="rpmH_bact"/>
    <property type="match status" value="1"/>
</dbReference>
<dbReference type="PANTHER" id="PTHR14503:SF4">
    <property type="entry name" value="LARGE RIBOSOMAL SUBUNIT PROTEIN BL34M"/>
    <property type="match status" value="1"/>
</dbReference>
<dbReference type="PANTHER" id="PTHR14503">
    <property type="entry name" value="MITOCHONDRIAL RIBOSOMAL PROTEIN 34 FAMILY MEMBER"/>
    <property type="match status" value="1"/>
</dbReference>
<dbReference type="Pfam" id="PF00468">
    <property type="entry name" value="Ribosomal_L34"/>
    <property type="match status" value="1"/>
</dbReference>
<dbReference type="PROSITE" id="PS00784">
    <property type="entry name" value="RIBOSOMAL_L34"/>
    <property type="match status" value="1"/>
</dbReference>
<keyword id="KW-0687">Ribonucleoprotein</keyword>
<keyword id="KW-0689">Ribosomal protein</keyword>
<comment type="similarity">
    <text evidence="1">Belongs to the bacterial ribosomal protein bL34 family.</text>
</comment>
<gene>
    <name evidence="1" type="primary">rpmH</name>
    <name type="ordered locus">WP1155</name>
</gene>
<feature type="chain" id="PRO_1000196141" description="Large ribosomal subunit protein bL34">
    <location>
        <begin position="1"/>
        <end position="44"/>
    </location>
</feature>
<feature type="region of interest" description="Disordered" evidence="2">
    <location>
        <begin position="1"/>
        <end position="44"/>
    </location>
</feature>
<feature type="compositionally biased region" description="Basic residues" evidence="2">
    <location>
        <begin position="1"/>
        <end position="19"/>
    </location>
</feature>
<feature type="compositionally biased region" description="Basic residues" evidence="2">
    <location>
        <begin position="26"/>
        <end position="36"/>
    </location>
</feature>
<proteinExistence type="inferred from homology"/>
<evidence type="ECO:0000255" key="1">
    <source>
        <dbReference type="HAMAP-Rule" id="MF_00391"/>
    </source>
</evidence>
<evidence type="ECO:0000256" key="2">
    <source>
        <dbReference type="SAM" id="MobiDB-lite"/>
    </source>
</evidence>
<evidence type="ECO:0000305" key="3"/>
<name>RL34_WOLPP</name>
<sequence>MKRTFQPKNLKKKHKHGFRSRMSTKAGRKILNKRRSLGCNKLCA</sequence>
<reference key="1">
    <citation type="journal article" date="2008" name="Mol. Biol. Evol.">
        <title>Genome evolution of Wolbachia strain wPip from the Culex pipiens group.</title>
        <authorList>
            <person name="Klasson L."/>
            <person name="Walker T."/>
            <person name="Sebaihia M."/>
            <person name="Sanders M.J."/>
            <person name="Quail M.A."/>
            <person name="Lord A."/>
            <person name="Sanders S."/>
            <person name="Earl J."/>
            <person name="O'Neill S.L."/>
            <person name="Thomson N."/>
            <person name="Sinkins S.P."/>
            <person name="Parkhill J."/>
        </authorList>
    </citation>
    <scope>NUCLEOTIDE SEQUENCE [LARGE SCALE GENOMIC DNA]</scope>
    <source>
        <strain>wPip</strain>
    </source>
</reference>
<organism>
    <name type="scientific">Wolbachia pipientis subsp. Culex pipiens (strain wPip)</name>
    <dbReference type="NCBI Taxonomy" id="570417"/>
    <lineage>
        <taxon>Bacteria</taxon>
        <taxon>Pseudomonadati</taxon>
        <taxon>Pseudomonadota</taxon>
        <taxon>Alphaproteobacteria</taxon>
        <taxon>Rickettsiales</taxon>
        <taxon>Anaplasmataceae</taxon>
        <taxon>Wolbachieae</taxon>
        <taxon>Wolbachia</taxon>
    </lineage>
</organism>
<accession>B3CN15</accession>
<protein>
    <recommendedName>
        <fullName evidence="1">Large ribosomal subunit protein bL34</fullName>
    </recommendedName>
    <alternativeName>
        <fullName evidence="3">50S ribosomal protein L34</fullName>
    </alternativeName>
</protein>